<dbReference type="EMBL" id="CP000422">
    <property type="protein sequence ID" value="ABJ68456.1"/>
    <property type="molecule type" value="Genomic_DNA"/>
</dbReference>
<dbReference type="RefSeq" id="WP_002833328.1">
    <property type="nucleotide sequence ID" value="NC_008525.1"/>
</dbReference>
<dbReference type="SMR" id="Q03EB6"/>
<dbReference type="STRING" id="278197.PEPE_1418"/>
<dbReference type="GeneID" id="33061793"/>
<dbReference type="KEGG" id="ppe:PEPE_1418"/>
<dbReference type="eggNOG" id="COG0087">
    <property type="taxonomic scope" value="Bacteria"/>
</dbReference>
<dbReference type="HOGENOM" id="CLU_044142_4_1_9"/>
<dbReference type="OrthoDB" id="9806135at2"/>
<dbReference type="Proteomes" id="UP000000773">
    <property type="component" value="Chromosome"/>
</dbReference>
<dbReference type="GO" id="GO:0022625">
    <property type="term" value="C:cytosolic large ribosomal subunit"/>
    <property type="evidence" value="ECO:0007669"/>
    <property type="project" value="TreeGrafter"/>
</dbReference>
<dbReference type="GO" id="GO:0019843">
    <property type="term" value="F:rRNA binding"/>
    <property type="evidence" value="ECO:0007669"/>
    <property type="project" value="UniProtKB-UniRule"/>
</dbReference>
<dbReference type="GO" id="GO:0003735">
    <property type="term" value="F:structural constituent of ribosome"/>
    <property type="evidence" value="ECO:0007669"/>
    <property type="project" value="InterPro"/>
</dbReference>
<dbReference type="GO" id="GO:0006412">
    <property type="term" value="P:translation"/>
    <property type="evidence" value="ECO:0007669"/>
    <property type="project" value="UniProtKB-UniRule"/>
</dbReference>
<dbReference type="FunFam" id="2.40.30.10:FF:000004">
    <property type="entry name" value="50S ribosomal protein L3"/>
    <property type="match status" value="1"/>
</dbReference>
<dbReference type="FunFam" id="3.30.160.810:FF:000002">
    <property type="entry name" value="50S ribosomal protein L3"/>
    <property type="match status" value="1"/>
</dbReference>
<dbReference type="Gene3D" id="3.30.160.810">
    <property type="match status" value="1"/>
</dbReference>
<dbReference type="Gene3D" id="2.40.30.10">
    <property type="entry name" value="Translation factors"/>
    <property type="match status" value="1"/>
</dbReference>
<dbReference type="HAMAP" id="MF_01325_B">
    <property type="entry name" value="Ribosomal_uL3_B"/>
    <property type="match status" value="1"/>
</dbReference>
<dbReference type="InterPro" id="IPR000597">
    <property type="entry name" value="Ribosomal_uL3"/>
</dbReference>
<dbReference type="InterPro" id="IPR019927">
    <property type="entry name" value="Ribosomal_uL3_bac/org-type"/>
</dbReference>
<dbReference type="InterPro" id="IPR009000">
    <property type="entry name" value="Transl_B-barrel_sf"/>
</dbReference>
<dbReference type="NCBIfam" id="TIGR03625">
    <property type="entry name" value="L3_bact"/>
    <property type="match status" value="1"/>
</dbReference>
<dbReference type="PANTHER" id="PTHR11229">
    <property type="entry name" value="50S RIBOSOMAL PROTEIN L3"/>
    <property type="match status" value="1"/>
</dbReference>
<dbReference type="PANTHER" id="PTHR11229:SF16">
    <property type="entry name" value="LARGE RIBOSOMAL SUBUNIT PROTEIN UL3C"/>
    <property type="match status" value="1"/>
</dbReference>
<dbReference type="Pfam" id="PF00297">
    <property type="entry name" value="Ribosomal_L3"/>
    <property type="match status" value="1"/>
</dbReference>
<dbReference type="SUPFAM" id="SSF50447">
    <property type="entry name" value="Translation proteins"/>
    <property type="match status" value="1"/>
</dbReference>
<comment type="function">
    <text evidence="1">One of the primary rRNA binding proteins, it binds directly near the 3'-end of the 23S rRNA, where it nucleates assembly of the 50S subunit.</text>
</comment>
<comment type="subunit">
    <text evidence="1">Part of the 50S ribosomal subunit. Forms a cluster with proteins L14 and L19.</text>
</comment>
<comment type="similarity">
    <text evidence="1">Belongs to the universal ribosomal protein uL3 family.</text>
</comment>
<accession>Q03EB6</accession>
<organism>
    <name type="scientific">Pediococcus pentosaceus (strain ATCC 25745 / CCUG 21536 / LMG 10740 / 183-1w)</name>
    <dbReference type="NCBI Taxonomy" id="278197"/>
    <lineage>
        <taxon>Bacteria</taxon>
        <taxon>Bacillati</taxon>
        <taxon>Bacillota</taxon>
        <taxon>Bacilli</taxon>
        <taxon>Lactobacillales</taxon>
        <taxon>Lactobacillaceae</taxon>
        <taxon>Pediococcus</taxon>
    </lineage>
</organism>
<name>RL3_PEDPA</name>
<evidence type="ECO:0000255" key="1">
    <source>
        <dbReference type="HAMAP-Rule" id="MF_01325"/>
    </source>
</evidence>
<evidence type="ECO:0000305" key="2"/>
<keyword id="KW-0687">Ribonucleoprotein</keyword>
<keyword id="KW-0689">Ribosomal protein</keyword>
<keyword id="KW-0694">RNA-binding</keyword>
<keyword id="KW-0699">rRNA-binding</keyword>
<proteinExistence type="inferred from homology"/>
<sequence>MTTKGILGKKVGMTQVFTEAGELIPVTVIDTTPNVVLQLKTVENDGYSSVQLGFDDKRQVLSNKPEQGHVAKANTNPKRFIHEIRNVELGDVKVGDTIAADIFEAGEIVDVTGTTKGHGFQGVIKKDGQRRGPMAHGSRYHRRPGSLGAVINRVFPGKKLPGRMGNKTVTIQHLEIVKADTENNVLLVKGNVPGAKKSYLVVKSTVKNTK</sequence>
<protein>
    <recommendedName>
        <fullName evidence="1">Large ribosomal subunit protein uL3</fullName>
    </recommendedName>
    <alternativeName>
        <fullName evidence="2">50S ribosomal protein L3</fullName>
    </alternativeName>
</protein>
<gene>
    <name evidence="1" type="primary">rplC</name>
    <name type="ordered locus">PEPE_1418</name>
</gene>
<reference key="1">
    <citation type="journal article" date="2006" name="Proc. Natl. Acad. Sci. U.S.A.">
        <title>Comparative genomics of the lactic acid bacteria.</title>
        <authorList>
            <person name="Makarova K.S."/>
            <person name="Slesarev A."/>
            <person name="Wolf Y.I."/>
            <person name="Sorokin A."/>
            <person name="Mirkin B."/>
            <person name="Koonin E.V."/>
            <person name="Pavlov A."/>
            <person name="Pavlova N."/>
            <person name="Karamychev V."/>
            <person name="Polouchine N."/>
            <person name="Shakhova V."/>
            <person name="Grigoriev I."/>
            <person name="Lou Y."/>
            <person name="Rohksar D."/>
            <person name="Lucas S."/>
            <person name="Huang K."/>
            <person name="Goodstein D.M."/>
            <person name="Hawkins T."/>
            <person name="Plengvidhya V."/>
            <person name="Welker D."/>
            <person name="Hughes J."/>
            <person name="Goh Y."/>
            <person name="Benson A."/>
            <person name="Baldwin K."/>
            <person name="Lee J.-H."/>
            <person name="Diaz-Muniz I."/>
            <person name="Dosti B."/>
            <person name="Smeianov V."/>
            <person name="Wechter W."/>
            <person name="Barabote R."/>
            <person name="Lorca G."/>
            <person name="Altermann E."/>
            <person name="Barrangou R."/>
            <person name="Ganesan B."/>
            <person name="Xie Y."/>
            <person name="Rawsthorne H."/>
            <person name="Tamir D."/>
            <person name="Parker C."/>
            <person name="Breidt F."/>
            <person name="Broadbent J.R."/>
            <person name="Hutkins R."/>
            <person name="O'Sullivan D."/>
            <person name="Steele J."/>
            <person name="Unlu G."/>
            <person name="Saier M.H. Jr."/>
            <person name="Klaenhammer T."/>
            <person name="Richardson P."/>
            <person name="Kozyavkin S."/>
            <person name="Weimer B.C."/>
            <person name="Mills D.A."/>
        </authorList>
    </citation>
    <scope>NUCLEOTIDE SEQUENCE [LARGE SCALE GENOMIC DNA]</scope>
    <source>
        <strain>ATCC 25745 / CCUG 21536 / LMG 10740 / 183-1w</strain>
    </source>
</reference>
<feature type="chain" id="PRO_1000052102" description="Large ribosomal subunit protein uL3">
    <location>
        <begin position="1"/>
        <end position="210"/>
    </location>
</feature>